<organism>
    <name type="scientific">Ehrlichia canis (strain Jake)</name>
    <dbReference type="NCBI Taxonomy" id="269484"/>
    <lineage>
        <taxon>Bacteria</taxon>
        <taxon>Pseudomonadati</taxon>
        <taxon>Pseudomonadota</taxon>
        <taxon>Alphaproteobacteria</taxon>
        <taxon>Rickettsiales</taxon>
        <taxon>Anaplasmataceae</taxon>
        <taxon>Ehrlichia</taxon>
    </lineage>
</organism>
<comment type="function">
    <text evidence="1">This enzyme is involved in nucleotide metabolism: it produces dUMP, the immediate precursor of thymidine nucleotides and it decreases the intracellular concentration of dUTP so that uracil cannot be incorporated into DNA.</text>
</comment>
<comment type="catalytic activity">
    <reaction evidence="1">
        <text>dUTP + H2O = dUMP + diphosphate + H(+)</text>
        <dbReference type="Rhea" id="RHEA:10248"/>
        <dbReference type="ChEBI" id="CHEBI:15377"/>
        <dbReference type="ChEBI" id="CHEBI:15378"/>
        <dbReference type="ChEBI" id="CHEBI:33019"/>
        <dbReference type="ChEBI" id="CHEBI:61555"/>
        <dbReference type="ChEBI" id="CHEBI:246422"/>
        <dbReference type="EC" id="3.6.1.23"/>
    </reaction>
</comment>
<comment type="cofactor">
    <cofactor evidence="1">
        <name>Mg(2+)</name>
        <dbReference type="ChEBI" id="CHEBI:18420"/>
    </cofactor>
</comment>
<comment type="pathway">
    <text evidence="1">Pyrimidine metabolism; dUMP biosynthesis; dUMP from dCTP (dUTP route): step 2/2.</text>
</comment>
<comment type="similarity">
    <text evidence="1">Belongs to the dUTPase family.</text>
</comment>
<dbReference type="EC" id="3.6.1.23" evidence="1"/>
<dbReference type="EMBL" id="CP000107">
    <property type="protein sequence ID" value="AAZ68563.1"/>
    <property type="molecule type" value="Genomic_DNA"/>
</dbReference>
<dbReference type="RefSeq" id="WP_011304641.1">
    <property type="nucleotide sequence ID" value="NC_007354.1"/>
</dbReference>
<dbReference type="SMR" id="Q3YRU2"/>
<dbReference type="FunCoup" id="Q3YRU2">
    <property type="interactions" value="258"/>
</dbReference>
<dbReference type="STRING" id="269484.Ecaj_0527"/>
<dbReference type="KEGG" id="ecn:Ecaj_0527"/>
<dbReference type="eggNOG" id="COG0756">
    <property type="taxonomic scope" value="Bacteria"/>
</dbReference>
<dbReference type="HOGENOM" id="CLU_068508_1_2_5"/>
<dbReference type="InParanoid" id="Q3YRU2"/>
<dbReference type="UniPathway" id="UPA00610">
    <property type="reaction ID" value="UER00666"/>
</dbReference>
<dbReference type="Proteomes" id="UP000000435">
    <property type="component" value="Chromosome"/>
</dbReference>
<dbReference type="GO" id="GO:0004170">
    <property type="term" value="F:dUTP diphosphatase activity"/>
    <property type="evidence" value="ECO:0007669"/>
    <property type="project" value="UniProtKB-UniRule"/>
</dbReference>
<dbReference type="GO" id="GO:0000287">
    <property type="term" value="F:magnesium ion binding"/>
    <property type="evidence" value="ECO:0007669"/>
    <property type="project" value="UniProtKB-UniRule"/>
</dbReference>
<dbReference type="GO" id="GO:0006226">
    <property type="term" value="P:dUMP biosynthetic process"/>
    <property type="evidence" value="ECO:0007669"/>
    <property type="project" value="UniProtKB-UniRule"/>
</dbReference>
<dbReference type="GO" id="GO:0046081">
    <property type="term" value="P:dUTP catabolic process"/>
    <property type="evidence" value="ECO:0007669"/>
    <property type="project" value="InterPro"/>
</dbReference>
<dbReference type="CDD" id="cd07557">
    <property type="entry name" value="trimeric_dUTPase"/>
    <property type="match status" value="1"/>
</dbReference>
<dbReference type="FunFam" id="2.70.40.10:FF:000002">
    <property type="entry name" value="dUTP diphosphatase"/>
    <property type="match status" value="1"/>
</dbReference>
<dbReference type="Gene3D" id="2.70.40.10">
    <property type="match status" value="1"/>
</dbReference>
<dbReference type="HAMAP" id="MF_00116">
    <property type="entry name" value="dUTPase_bact"/>
    <property type="match status" value="1"/>
</dbReference>
<dbReference type="InterPro" id="IPR008181">
    <property type="entry name" value="dUTPase"/>
</dbReference>
<dbReference type="InterPro" id="IPR029054">
    <property type="entry name" value="dUTPase-like"/>
</dbReference>
<dbReference type="InterPro" id="IPR036157">
    <property type="entry name" value="dUTPase-like_sf"/>
</dbReference>
<dbReference type="InterPro" id="IPR033704">
    <property type="entry name" value="dUTPase_trimeric"/>
</dbReference>
<dbReference type="NCBIfam" id="TIGR00576">
    <property type="entry name" value="dut"/>
    <property type="match status" value="1"/>
</dbReference>
<dbReference type="NCBIfam" id="NF001862">
    <property type="entry name" value="PRK00601.1"/>
    <property type="match status" value="1"/>
</dbReference>
<dbReference type="PANTHER" id="PTHR11241">
    <property type="entry name" value="DEOXYURIDINE 5'-TRIPHOSPHATE NUCLEOTIDOHYDROLASE"/>
    <property type="match status" value="1"/>
</dbReference>
<dbReference type="PANTHER" id="PTHR11241:SF0">
    <property type="entry name" value="DEOXYURIDINE 5'-TRIPHOSPHATE NUCLEOTIDOHYDROLASE"/>
    <property type="match status" value="1"/>
</dbReference>
<dbReference type="Pfam" id="PF00692">
    <property type="entry name" value="dUTPase"/>
    <property type="match status" value="1"/>
</dbReference>
<dbReference type="SUPFAM" id="SSF51283">
    <property type="entry name" value="dUTPase-like"/>
    <property type="match status" value="1"/>
</dbReference>
<feature type="chain" id="PRO_0000231409" description="Deoxyuridine 5'-triphosphate nucleotidohydrolase">
    <location>
        <begin position="1"/>
        <end position="153"/>
    </location>
</feature>
<feature type="binding site" evidence="1">
    <location>
        <begin position="71"/>
        <end position="73"/>
    </location>
    <ligand>
        <name>substrate</name>
    </ligand>
</feature>
<feature type="binding site" evidence="1">
    <location>
        <position position="84"/>
    </location>
    <ligand>
        <name>substrate</name>
    </ligand>
</feature>
<feature type="binding site" evidence="1">
    <location>
        <begin position="88"/>
        <end position="90"/>
    </location>
    <ligand>
        <name>substrate</name>
    </ligand>
</feature>
<feature type="binding site" evidence="1">
    <location>
        <position position="98"/>
    </location>
    <ligand>
        <name>substrate</name>
    </ligand>
</feature>
<proteinExistence type="inferred from homology"/>
<name>DUT_EHRCJ</name>
<protein>
    <recommendedName>
        <fullName evidence="1">Deoxyuridine 5'-triphosphate nucleotidohydrolase</fullName>
        <shortName evidence="1">dUTPase</shortName>
        <ecNumber evidence="1">3.6.1.23</ecNumber>
    </recommendedName>
    <alternativeName>
        <fullName evidence="1">dUTP pyrophosphatase</fullName>
    </alternativeName>
</protein>
<gene>
    <name evidence="1" type="primary">dut</name>
    <name type="ordered locus">Ecaj_0527</name>
</gene>
<keyword id="KW-0378">Hydrolase</keyword>
<keyword id="KW-0460">Magnesium</keyword>
<keyword id="KW-0479">Metal-binding</keyword>
<keyword id="KW-0546">Nucleotide metabolism</keyword>
<sequence length="153" mass="16556">MKNNTDILIKVIKLNSNNLPLPSYSTENSSGMDLYSAMTQDVILAPGCRACINTGIAISVPNGYEAQVRPRSGLALKFGITVLNTPGTIDADYRGEIKVILINLGHETYTIKYGDRIAQMVIAPVIHASWNLVKDLDDDTTKRGDQGFGSTGI</sequence>
<evidence type="ECO:0000255" key="1">
    <source>
        <dbReference type="HAMAP-Rule" id="MF_00116"/>
    </source>
</evidence>
<reference key="1">
    <citation type="journal article" date="2006" name="J. Bacteriol.">
        <title>The genome of the obligately intracellular bacterium Ehrlichia canis reveals themes of complex membrane structure and immune evasion strategies.</title>
        <authorList>
            <person name="Mavromatis K."/>
            <person name="Doyle C.K."/>
            <person name="Lykidis A."/>
            <person name="Ivanova N."/>
            <person name="Francino M.P."/>
            <person name="Chain P."/>
            <person name="Shin M."/>
            <person name="Malfatti S."/>
            <person name="Larimer F."/>
            <person name="Copeland A."/>
            <person name="Detter J.C."/>
            <person name="Land M."/>
            <person name="Richardson P.M."/>
            <person name="Yu X.J."/>
            <person name="Walker D.H."/>
            <person name="McBride J.W."/>
            <person name="Kyrpides N.C."/>
        </authorList>
    </citation>
    <scope>NUCLEOTIDE SEQUENCE [LARGE SCALE GENOMIC DNA]</scope>
    <source>
        <strain>Jake</strain>
    </source>
</reference>
<accession>Q3YRU2</accession>